<proteinExistence type="evidence at protein level"/>
<name>CLIC4_MOUSE</name>
<dbReference type="EC" id="1.8.-.-" evidence="3"/>
<dbReference type="EMBL" id="AF102578">
    <property type="protein sequence ID" value="AAF19055.1"/>
    <property type="molecule type" value="mRNA"/>
</dbReference>
<dbReference type="EMBL" id="AK031211">
    <property type="protein sequence ID" value="BAC27301.1"/>
    <property type="molecule type" value="mRNA"/>
</dbReference>
<dbReference type="EMBL" id="BC046384">
    <property type="protein sequence ID" value="AAH46384.1"/>
    <property type="molecule type" value="mRNA"/>
</dbReference>
<dbReference type="EMBL" id="BC052890">
    <property type="protein sequence ID" value="AAH52890.1"/>
    <property type="molecule type" value="mRNA"/>
</dbReference>
<dbReference type="CCDS" id="CCDS18783.1"/>
<dbReference type="RefSeq" id="NP_038913.1">
    <property type="nucleotide sequence ID" value="NM_013885.2"/>
</dbReference>
<dbReference type="SMR" id="Q9QYB1"/>
<dbReference type="BioGRID" id="205939">
    <property type="interactions" value="7"/>
</dbReference>
<dbReference type="FunCoup" id="Q9QYB1">
    <property type="interactions" value="2242"/>
</dbReference>
<dbReference type="IntAct" id="Q9QYB1">
    <property type="interactions" value="1"/>
</dbReference>
<dbReference type="STRING" id="10090.ENSMUSP00000041453"/>
<dbReference type="GlyGen" id="Q9QYB1">
    <property type="glycosylation" value="1 site, 1 O-linked glycan (1 site)"/>
</dbReference>
<dbReference type="iPTMnet" id="Q9QYB1"/>
<dbReference type="PhosphoSitePlus" id="Q9QYB1"/>
<dbReference type="SwissPalm" id="Q9QYB1"/>
<dbReference type="jPOST" id="Q9QYB1"/>
<dbReference type="PaxDb" id="10090-ENSMUSP00000041453"/>
<dbReference type="ProteomicsDB" id="283301"/>
<dbReference type="Pumba" id="Q9QYB1"/>
<dbReference type="Antibodypedia" id="1956">
    <property type="antibodies" value="358 antibodies from 40 providers"/>
</dbReference>
<dbReference type="DNASU" id="29876"/>
<dbReference type="Ensembl" id="ENSMUST00000037099.9">
    <property type="protein sequence ID" value="ENSMUSP00000041453.9"/>
    <property type="gene ID" value="ENSMUSG00000037242.9"/>
</dbReference>
<dbReference type="GeneID" id="29876"/>
<dbReference type="KEGG" id="mmu:29876"/>
<dbReference type="UCSC" id="uc008vgd.1">
    <property type="organism name" value="mouse"/>
</dbReference>
<dbReference type="AGR" id="MGI:1352754"/>
<dbReference type="CTD" id="25932"/>
<dbReference type="MGI" id="MGI:1352754">
    <property type="gene designation" value="Clic4"/>
</dbReference>
<dbReference type="VEuPathDB" id="HostDB:ENSMUSG00000037242"/>
<dbReference type="eggNOG" id="KOG1422">
    <property type="taxonomic scope" value="Eukaryota"/>
</dbReference>
<dbReference type="GeneTree" id="ENSGT00940000155017"/>
<dbReference type="HOGENOM" id="CLU_061051_1_0_1"/>
<dbReference type="InParanoid" id="Q9QYB1"/>
<dbReference type="OMA" id="LCPPKYA"/>
<dbReference type="OrthoDB" id="1935530at2759"/>
<dbReference type="PhylomeDB" id="Q9QYB1"/>
<dbReference type="TreeFam" id="TF315438"/>
<dbReference type="BioGRID-ORCS" id="29876">
    <property type="hits" value="1 hit in 78 CRISPR screens"/>
</dbReference>
<dbReference type="ChiTaRS" id="Clic4">
    <property type="organism name" value="mouse"/>
</dbReference>
<dbReference type="PRO" id="PR:Q9QYB1"/>
<dbReference type="Proteomes" id="UP000000589">
    <property type="component" value="Chromosome 4"/>
</dbReference>
<dbReference type="RNAct" id="Q9QYB1">
    <property type="molecule type" value="protein"/>
</dbReference>
<dbReference type="Bgee" id="ENSMUSG00000037242">
    <property type="expression patterns" value="Expressed in gastrula and 270 other cell types or tissues"/>
</dbReference>
<dbReference type="ExpressionAtlas" id="Q9QYB1">
    <property type="expression patterns" value="baseline and differential"/>
</dbReference>
<dbReference type="GO" id="GO:0045177">
    <property type="term" value="C:apical part of cell"/>
    <property type="evidence" value="ECO:0007669"/>
    <property type="project" value="Ensembl"/>
</dbReference>
<dbReference type="GO" id="GO:0009986">
    <property type="term" value="C:cell surface"/>
    <property type="evidence" value="ECO:0007669"/>
    <property type="project" value="Ensembl"/>
</dbReference>
<dbReference type="GO" id="GO:0005911">
    <property type="term" value="C:cell-cell junction"/>
    <property type="evidence" value="ECO:0007669"/>
    <property type="project" value="Ensembl"/>
</dbReference>
<dbReference type="GO" id="GO:0005813">
    <property type="term" value="C:centrosome"/>
    <property type="evidence" value="ECO:0007669"/>
    <property type="project" value="UniProtKB-SubCell"/>
</dbReference>
<dbReference type="GO" id="GO:0034707">
    <property type="term" value="C:chloride channel complex"/>
    <property type="evidence" value="ECO:0007669"/>
    <property type="project" value="UniProtKB-KW"/>
</dbReference>
<dbReference type="GO" id="GO:0005737">
    <property type="term" value="C:cytoplasm"/>
    <property type="evidence" value="ECO:0000250"/>
    <property type="project" value="UniProtKB"/>
</dbReference>
<dbReference type="GO" id="GO:0030659">
    <property type="term" value="C:cytoplasmic vesicle membrane"/>
    <property type="evidence" value="ECO:0007669"/>
    <property type="project" value="UniProtKB-SubCell"/>
</dbReference>
<dbReference type="GO" id="GO:0005829">
    <property type="term" value="C:cytosol"/>
    <property type="evidence" value="ECO:0007669"/>
    <property type="project" value="Ensembl"/>
</dbReference>
<dbReference type="GO" id="GO:0005902">
    <property type="term" value="C:microvillus"/>
    <property type="evidence" value="ECO:0007669"/>
    <property type="project" value="Ensembl"/>
</dbReference>
<dbReference type="GO" id="GO:0030496">
    <property type="term" value="C:midbody"/>
    <property type="evidence" value="ECO:0007669"/>
    <property type="project" value="Ensembl"/>
</dbReference>
<dbReference type="GO" id="GO:0005739">
    <property type="term" value="C:mitochondrion"/>
    <property type="evidence" value="ECO:0000314"/>
    <property type="project" value="MGI"/>
</dbReference>
<dbReference type="GO" id="GO:0016363">
    <property type="term" value="C:nuclear matrix"/>
    <property type="evidence" value="ECO:0007669"/>
    <property type="project" value="Ensembl"/>
</dbReference>
<dbReference type="GO" id="GO:0048471">
    <property type="term" value="C:perinuclear region of cytoplasm"/>
    <property type="evidence" value="ECO:0007669"/>
    <property type="project" value="Ensembl"/>
</dbReference>
<dbReference type="GO" id="GO:0005886">
    <property type="term" value="C:plasma membrane"/>
    <property type="evidence" value="ECO:0007669"/>
    <property type="project" value="UniProtKB-SubCell"/>
</dbReference>
<dbReference type="GO" id="GO:0005254">
    <property type="term" value="F:chloride channel activity"/>
    <property type="evidence" value="ECO:0000266"/>
    <property type="project" value="MGI"/>
</dbReference>
<dbReference type="GO" id="GO:0016491">
    <property type="term" value="F:oxidoreductase activity"/>
    <property type="evidence" value="ECO:0007669"/>
    <property type="project" value="UniProtKB-KW"/>
</dbReference>
<dbReference type="GO" id="GO:0001525">
    <property type="term" value="P:angiogenesis"/>
    <property type="evidence" value="ECO:0000315"/>
    <property type="project" value="MGI"/>
</dbReference>
<dbReference type="GO" id="GO:0048754">
    <property type="term" value="P:branching morphogenesis of an epithelial tube"/>
    <property type="evidence" value="ECO:0000315"/>
    <property type="project" value="MGI"/>
</dbReference>
<dbReference type="GO" id="GO:0071277">
    <property type="term" value="P:cellular response to calcium ion"/>
    <property type="evidence" value="ECO:0007669"/>
    <property type="project" value="Ensembl"/>
</dbReference>
<dbReference type="GO" id="GO:0006821">
    <property type="term" value="P:chloride transport"/>
    <property type="evidence" value="ECO:0000266"/>
    <property type="project" value="MGI"/>
</dbReference>
<dbReference type="GO" id="GO:0001886">
    <property type="term" value="P:endothelial cell morphogenesis"/>
    <property type="evidence" value="ECO:0000315"/>
    <property type="project" value="MGI"/>
</dbReference>
<dbReference type="GO" id="GO:0009566">
    <property type="term" value="P:fertilization"/>
    <property type="evidence" value="ECO:0000315"/>
    <property type="project" value="MGI"/>
</dbReference>
<dbReference type="GO" id="GO:0030216">
    <property type="term" value="P:keratinocyte differentiation"/>
    <property type="evidence" value="ECO:0000315"/>
    <property type="project" value="UniProtKB"/>
</dbReference>
<dbReference type="GO" id="GO:0035264">
    <property type="term" value="P:multicellular organism growth"/>
    <property type="evidence" value="ECO:0000315"/>
    <property type="project" value="MGI"/>
</dbReference>
<dbReference type="GO" id="GO:0030336">
    <property type="term" value="P:negative regulation of cell migration"/>
    <property type="evidence" value="ECO:0000250"/>
    <property type="project" value="UniProtKB"/>
</dbReference>
<dbReference type="GO" id="GO:0061299">
    <property type="term" value="P:retina vasculature morphogenesis in camera-type eye"/>
    <property type="evidence" value="ECO:0000315"/>
    <property type="project" value="MGI"/>
</dbReference>
<dbReference type="GO" id="GO:0007035">
    <property type="term" value="P:vacuolar acidification"/>
    <property type="evidence" value="ECO:0000315"/>
    <property type="project" value="MGI"/>
</dbReference>
<dbReference type="CDD" id="cd03061">
    <property type="entry name" value="GST_N_CLIC"/>
    <property type="match status" value="1"/>
</dbReference>
<dbReference type="FunFam" id="1.20.1050.10:FF:000001">
    <property type="entry name" value="Chloride intracellular channel 2"/>
    <property type="match status" value="1"/>
</dbReference>
<dbReference type="FunFam" id="3.40.30.10:FF:000021">
    <property type="entry name" value="Chloride intracellular channel 4"/>
    <property type="match status" value="1"/>
</dbReference>
<dbReference type="Gene3D" id="1.20.1050.10">
    <property type="match status" value="1"/>
</dbReference>
<dbReference type="Gene3D" id="3.40.30.10">
    <property type="entry name" value="Glutaredoxin"/>
    <property type="match status" value="1"/>
</dbReference>
<dbReference type="InterPro" id="IPR002946">
    <property type="entry name" value="CLIC"/>
</dbReference>
<dbReference type="InterPro" id="IPR053823">
    <property type="entry name" value="CLIC_N"/>
</dbReference>
<dbReference type="InterPro" id="IPR010987">
    <property type="entry name" value="Glutathione-S-Trfase_C-like"/>
</dbReference>
<dbReference type="InterPro" id="IPR036282">
    <property type="entry name" value="Glutathione-S-Trfase_C_sf"/>
</dbReference>
<dbReference type="InterPro" id="IPR040079">
    <property type="entry name" value="Glutathione_S-Trfase"/>
</dbReference>
<dbReference type="InterPro" id="IPR036249">
    <property type="entry name" value="Thioredoxin-like_sf"/>
</dbReference>
<dbReference type="NCBIfam" id="TIGR00862">
    <property type="entry name" value="O-ClC"/>
    <property type="match status" value="1"/>
</dbReference>
<dbReference type="PANTHER" id="PTHR45476:SF5">
    <property type="entry name" value="CHLORIDE INTRACELLULAR CHANNEL 4-RELATED"/>
    <property type="match status" value="1"/>
</dbReference>
<dbReference type="PANTHER" id="PTHR45476">
    <property type="entry name" value="CHLORIDE INTRACELLULAR CHANNEL PROTEIN 6-RELATED"/>
    <property type="match status" value="1"/>
</dbReference>
<dbReference type="Pfam" id="PF22441">
    <property type="entry name" value="CLIC-like_N"/>
    <property type="match status" value="1"/>
</dbReference>
<dbReference type="Pfam" id="PF13410">
    <property type="entry name" value="GST_C_2"/>
    <property type="match status" value="1"/>
</dbReference>
<dbReference type="PRINTS" id="PR01263">
    <property type="entry name" value="INTCLCHANNEL"/>
</dbReference>
<dbReference type="SFLD" id="SFLDS00019">
    <property type="entry name" value="Glutathione_Transferase_(cytos"/>
    <property type="match status" value="1"/>
</dbReference>
<dbReference type="SFLD" id="SFLDG00358">
    <property type="entry name" value="Main_(cytGST)"/>
    <property type="match status" value="1"/>
</dbReference>
<dbReference type="SUPFAM" id="SSF47616">
    <property type="entry name" value="GST C-terminal domain-like"/>
    <property type="match status" value="1"/>
</dbReference>
<dbReference type="SUPFAM" id="SSF52833">
    <property type="entry name" value="Thioredoxin-like"/>
    <property type="match status" value="1"/>
</dbReference>
<dbReference type="PROSITE" id="PS50405">
    <property type="entry name" value="GST_CTER"/>
    <property type="match status" value="1"/>
</dbReference>
<comment type="function">
    <text evidence="3 4">In the soluble state, catalyzes glutaredoxin-like thiol disulfide exchange reactions with reduced glutathione as electron donor (By similarity). Can insert into membranes and form voltage-dependent multi-ion conductive channels. Membrane insertion seems to be redox-regulated and may occur only under oxidizing conditions (By similarity). Has alternate cellular functions like a potential role in angiogenesis or in maintaining apical-basolateral membrane polarity during mitosis and cytokinesis. Could also promote endothelial cell proliferation and regulate endothelial morphogenesis (tubulogenesis). Promotes cell-surface expression of HRH3 (By similarity).</text>
</comment>
<comment type="catalytic activity">
    <reaction evidence="3 4">
        <text>chloride(in) = chloride(out)</text>
        <dbReference type="Rhea" id="RHEA:29823"/>
        <dbReference type="ChEBI" id="CHEBI:17996"/>
    </reaction>
</comment>
<comment type="catalytic activity">
    <reaction evidence="4">
        <text>thiocyanate(in) = thiocyanate(out)</text>
        <dbReference type="Rhea" id="RHEA:75347"/>
        <dbReference type="ChEBI" id="CHEBI:18022"/>
    </reaction>
</comment>
<comment type="catalytic activity">
    <reaction evidence="4">
        <text>nitrate(in) = nitrate(out)</text>
        <dbReference type="Rhea" id="RHEA:34923"/>
        <dbReference type="ChEBI" id="CHEBI:17632"/>
    </reaction>
</comment>
<comment type="catalytic activity">
    <reaction evidence="4">
        <text>iodide(out) = iodide(in)</text>
        <dbReference type="Rhea" id="RHEA:66324"/>
        <dbReference type="ChEBI" id="CHEBI:16382"/>
    </reaction>
</comment>
<comment type="catalytic activity">
    <reaction evidence="4">
        <text>bromide(in) = bromide(out)</text>
        <dbReference type="Rhea" id="RHEA:75383"/>
        <dbReference type="ChEBI" id="CHEBI:15858"/>
    </reaction>
</comment>
<comment type="catalytic activity">
    <reaction evidence="4">
        <text>fluoride(in) = fluoride(out)</text>
        <dbReference type="Rhea" id="RHEA:76159"/>
        <dbReference type="ChEBI" id="CHEBI:17051"/>
    </reaction>
</comment>
<comment type="catalytic activity">
    <reaction evidence="4">
        <text>choline(out) = choline(in)</text>
        <dbReference type="Rhea" id="RHEA:32751"/>
        <dbReference type="ChEBI" id="CHEBI:15354"/>
    </reaction>
</comment>
<comment type="subunit">
    <text evidence="1">Monomer. Interacts with HRH30. Interacts with AKAP9 (By similarity).</text>
</comment>
<comment type="interaction">
    <interactant intactId="EBI-645175">
        <id>Q9QYB1</id>
    </interactant>
    <interactant intactId="EBI-645167">
        <id>P70181</id>
        <label>Pip5k1b</label>
    </interactant>
    <organismsDiffer>false</organismsDiffer>
    <experiments>4</experiments>
</comment>
<comment type="subcellular location">
    <subcellularLocation>
        <location evidence="3">Cytoplasm</location>
        <location evidence="3">Cytoskeleton</location>
        <location evidence="3">Microtubule organizing center</location>
        <location evidence="3">Centrosome</location>
    </subcellularLocation>
    <subcellularLocation>
        <location evidence="3">Cytoplasmic vesicle membrane</location>
        <topology evidence="3">Single-pass membrane protein</topology>
    </subcellularLocation>
    <subcellularLocation>
        <location evidence="3">Nucleus</location>
    </subcellularLocation>
    <subcellularLocation>
        <location evidence="3">Cell membrane</location>
        <topology evidence="3">Single-pass membrane protein</topology>
    </subcellularLocation>
    <subcellularLocation>
        <location evidence="8 9">Mitochondrion</location>
    </subcellularLocation>
    <subcellularLocation>
        <location evidence="3">Cell junction</location>
    </subcellularLocation>
    <text evidence="3 4">Colocalized with AKAP9 at the centrosome and midbody. Exists both as soluble cytoplasmic protein and as membrane protein with probably a single transmembrane domain. Present in an intracellular vesicular compartment that likely represent trans-Golgi network vesicles. Might not be present in the nucleus of cardiac cells.</text>
</comment>
<comment type="tissue specificity">
    <text evidence="8 9 10">Detected in blood vessels in the retina (at protein level). Expressed to the greatest extent in vivo in heart, lung, liver, kidney, and skin.</text>
</comment>
<comment type="induction">
    <text evidence="9">Up-regulated by calcium ions in differentiating keratinocytes.</text>
</comment>
<comment type="domain">
    <text evidence="3">The active G-site contains a monothiol Cys-X-X-Ser motif which mediates glutathione-dependent redox catalysis.</text>
</comment>
<comment type="domain">
    <text evidence="3">Members of this family may change from a globular, soluble state to a state where the N-terminal domain is inserted into the membrane and functions as a chloride channel. The redox status of the active cysteine in Cys-X-X-Cys/Ser motif likely determines the capacity to adopt a soluble or membrane-inserted state. A conformation change of the N-terminal domain is thought to expose hydrophobic surfaces that trigger membrane insertion.</text>
</comment>
<comment type="similarity">
    <text evidence="11">Belongs to the chloride channel CLIC family.</text>
</comment>
<protein>
    <recommendedName>
        <fullName>Chloride intracellular channel protein 4</fullName>
        <shortName>mc3s5/mtCLIC</shortName>
    </recommendedName>
    <alternativeName>
        <fullName evidence="3">Glutaredoxin-like oxidoreductase CLIC4</fullName>
        <ecNumber evidence="3">1.8.-.-</ecNumber>
    </alternativeName>
</protein>
<organism>
    <name type="scientific">Mus musculus</name>
    <name type="common">Mouse</name>
    <dbReference type="NCBI Taxonomy" id="10090"/>
    <lineage>
        <taxon>Eukaryota</taxon>
        <taxon>Metazoa</taxon>
        <taxon>Chordata</taxon>
        <taxon>Craniata</taxon>
        <taxon>Vertebrata</taxon>
        <taxon>Euteleostomi</taxon>
        <taxon>Mammalia</taxon>
        <taxon>Eutheria</taxon>
        <taxon>Euarchontoglires</taxon>
        <taxon>Glires</taxon>
        <taxon>Rodentia</taxon>
        <taxon>Myomorpha</taxon>
        <taxon>Muroidea</taxon>
        <taxon>Muridae</taxon>
        <taxon>Murinae</taxon>
        <taxon>Mus</taxon>
        <taxon>Mus</taxon>
    </lineage>
</organism>
<accession>Q9QYB1</accession>
<accession>Q8BMG5</accession>
<reference key="1">
    <citation type="journal article" date="1999" name="J. Biol. Chem.">
        <title>p53 and tumor necrosis factor alpha regulate the expression of a mitochondrial chloride channel protein.</title>
        <authorList>
            <person name="Fernandez-Salas E."/>
            <person name="Sagar M."/>
            <person name="Cheng C."/>
            <person name="Yuspa S.H."/>
            <person name="Weinberg W.C."/>
        </authorList>
    </citation>
    <scope>NUCLEOTIDE SEQUENCE [MRNA]</scope>
    <scope>SUBCELLULAR LOCATION</scope>
    <scope>TISSUE SPECIFICITY</scope>
</reference>
<reference key="2">
    <citation type="journal article" date="2005" name="Science">
        <title>The transcriptional landscape of the mammalian genome.</title>
        <authorList>
            <person name="Carninci P."/>
            <person name="Kasukawa T."/>
            <person name="Katayama S."/>
            <person name="Gough J."/>
            <person name="Frith M.C."/>
            <person name="Maeda N."/>
            <person name="Oyama R."/>
            <person name="Ravasi T."/>
            <person name="Lenhard B."/>
            <person name="Wells C."/>
            <person name="Kodzius R."/>
            <person name="Shimokawa K."/>
            <person name="Bajic V.B."/>
            <person name="Brenner S.E."/>
            <person name="Batalov S."/>
            <person name="Forrest A.R."/>
            <person name="Zavolan M."/>
            <person name="Davis M.J."/>
            <person name="Wilming L.G."/>
            <person name="Aidinis V."/>
            <person name="Allen J.E."/>
            <person name="Ambesi-Impiombato A."/>
            <person name="Apweiler R."/>
            <person name="Aturaliya R.N."/>
            <person name="Bailey T.L."/>
            <person name="Bansal M."/>
            <person name="Baxter L."/>
            <person name="Beisel K.W."/>
            <person name="Bersano T."/>
            <person name="Bono H."/>
            <person name="Chalk A.M."/>
            <person name="Chiu K.P."/>
            <person name="Choudhary V."/>
            <person name="Christoffels A."/>
            <person name="Clutterbuck D.R."/>
            <person name="Crowe M.L."/>
            <person name="Dalla E."/>
            <person name="Dalrymple B.P."/>
            <person name="de Bono B."/>
            <person name="Della Gatta G."/>
            <person name="di Bernardo D."/>
            <person name="Down T."/>
            <person name="Engstrom P."/>
            <person name="Fagiolini M."/>
            <person name="Faulkner G."/>
            <person name="Fletcher C.F."/>
            <person name="Fukushima T."/>
            <person name="Furuno M."/>
            <person name="Futaki S."/>
            <person name="Gariboldi M."/>
            <person name="Georgii-Hemming P."/>
            <person name="Gingeras T.R."/>
            <person name="Gojobori T."/>
            <person name="Green R.E."/>
            <person name="Gustincich S."/>
            <person name="Harbers M."/>
            <person name="Hayashi Y."/>
            <person name="Hensch T.K."/>
            <person name="Hirokawa N."/>
            <person name="Hill D."/>
            <person name="Huminiecki L."/>
            <person name="Iacono M."/>
            <person name="Ikeo K."/>
            <person name="Iwama A."/>
            <person name="Ishikawa T."/>
            <person name="Jakt M."/>
            <person name="Kanapin A."/>
            <person name="Katoh M."/>
            <person name="Kawasawa Y."/>
            <person name="Kelso J."/>
            <person name="Kitamura H."/>
            <person name="Kitano H."/>
            <person name="Kollias G."/>
            <person name="Krishnan S.P."/>
            <person name="Kruger A."/>
            <person name="Kummerfeld S.K."/>
            <person name="Kurochkin I.V."/>
            <person name="Lareau L.F."/>
            <person name="Lazarevic D."/>
            <person name="Lipovich L."/>
            <person name="Liu J."/>
            <person name="Liuni S."/>
            <person name="McWilliam S."/>
            <person name="Madan Babu M."/>
            <person name="Madera M."/>
            <person name="Marchionni L."/>
            <person name="Matsuda H."/>
            <person name="Matsuzawa S."/>
            <person name="Miki H."/>
            <person name="Mignone F."/>
            <person name="Miyake S."/>
            <person name="Morris K."/>
            <person name="Mottagui-Tabar S."/>
            <person name="Mulder N."/>
            <person name="Nakano N."/>
            <person name="Nakauchi H."/>
            <person name="Ng P."/>
            <person name="Nilsson R."/>
            <person name="Nishiguchi S."/>
            <person name="Nishikawa S."/>
            <person name="Nori F."/>
            <person name="Ohara O."/>
            <person name="Okazaki Y."/>
            <person name="Orlando V."/>
            <person name="Pang K.C."/>
            <person name="Pavan W.J."/>
            <person name="Pavesi G."/>
            <person name="Pesole G."/>
            <person name="Petrovsky N."/>
            <person name="Piazza S."/>
            <person name="Reed J."/>
            <person name="Reid J.F."/>
            <person name="Ring B.Z."/>
            <person name="Ringwald M."/>
            <person name="Rost B."/>
            <person name="Ruan Y."/>
            <person name="Salzberg S.L."/>
            <person name="Sandelin A."/>
            <person name="Schneider C."/>
            <person name="Schoenbach C."/>
            <person name="Sekiguchi K."/>
            <person name="Semple C.A."/>
            <person name="Seno S."/>
            <person name="Sessa L."/>
            <person name="Sheng Y."/>
            <person name="Shibata Y."/>
            <person name="Shimada H."/>
            <person name="Shimada K."/>
            <person name="Silva D."/>
            <person name="Sinclair B."/>
            <person name="Sperling S."/>
            <person name="Stupka E."/>
            <person name="Sugiura K."/>
            <person name="Sultana R."/>
            <person name="Takenaka Y."/>
            <person name="Taki K."/>
            <person name="Tammoja K."/>
            <person name="Tan S.L."/>
            <person name="Tang S."/>
            <person name="Taylor M.S."/>
            <person name="Tegner J."/>
            <person name="Teichmann S.A."/>
            <person name="Ueda H.R."/>
            <person name="van Nimwegen E."/>
            <person name="Verardo R."/>
            <person name="Wei C.L."/>
            <person name="Yagi K."/>
            <person name="Yamanishi H."/>
            <person name="Zabarovsky E."/>
            <person name="Zhu S."/>
            <person name="Zimmer A."/>
            <person name="Hide W."/>
            <person name="Bult C."/>
            <person name="Grimmond S.M."/>
            <person name="Teasdale R.D."/>
            <person name="Liu E.T."/>
            <person name="Brusic V."/>
            <person name="Quackenbush J."/>
            <person name="Wahlestedt C."/>
            <person name="Mattick J.S."/>
            <person name="Hume D.A."/>
            <person name="Kai C."/>
            <person name="Sasaki D."/>
            <person name="Tomaru Y."/>
            <person name="Fukuda S."/>
            <person name="Kanamori-Katayama M."/>
            <person name="Suzuki M."/>
            <person name="Aoki J."/>
            <person name="Arakawa T."/>
            <person name="Iida J."/>
            <person name="Imamura K."/>
            <person name="Itoh M."/>
            <person name="Kato T."/>
            <person name="Kawaji H."/>
            <person name="Kawagashira N."/>
            <person name="Kawashima T."/>
            <person name="Kojima M."/>
            <person name="Kondo S."/>
            <person name="Konno H."/>
            <person name="Nakano K."/>
            <person name="Ninomiya N."/>
            <person name="Nishio T."/>
            <person name="Okada M."/>
            <person name="Plessy C."/>
            <person name="Shibata K."/>
            <person name="Shiraki T."/>
            <person name="Suzuki S."/>
            <person name="Tagami M."/>
            <person name="Waki K."/>
            <person name="Watahiki A."/>
            <person name="Okamura-Oho Y."/>
            <person name="Suzuki H."/>
            <person name="Kawai J."/>
            <person name="Hayashizaki Y."/>
        </authorList>
    </citation>
    <scope>NUCLEOTIDE SEQUENCE [LARGE SCALE MRNA]</scope>
    <source>
        <strain>C57BL/6J</strain>
        <tissue>Forelimb</tissue>
    </source>
</reference>
<reference key="3">
    <citation type="journal article" date="2004" name="Genome Res.">
        <title>The status, quality, and expansion of the NIH full-length cDNA project: the Mammalian Gene Collection (MGC).</title>
        <authorList>
            <consortium name="The MGC Project Team"/>
        </authorList>
    </citation>
    <scope>NUCLEOTIDE SEQUENCE [LARGE SCALE MRNA]</scope>
    <source>
        <strain>C3H/He</strain>
        <tissue>Mammary gland</tissue>
        <tissue>Osteoblast</tissue>
    </source>
</reference>
<reference key="4">
    <citation type="journal article" date="2007" name="J. Cell Sci.">
        <title>CLIC4 mediates and is required for Ca2+-induced keratinocyte differentiation.</title>
        <authorList>
            <person name="Suh K.S."/>
            <person name="Mutoh M."/>
            <person name="Mutoh T."/>
            <person name="Li L."/>
            <person name="Ryscavage A."/>
            <person name="Crutchley J.M."/>
            <person name="Dumont R.A."/>
            <person name="Cheng C."/>
            <person name="Yuspa S.H."/>
        </authorList>
    </citation>
    <scope>TISSUE SPECIFICITY</scope>
    <scope>INDUCTION</scope>
    <scope>SUBCELLULAR LOCATION</scope>
</reference>
<reference key="5">
    <citation type="journal article" date="2007" name="Proc. Natl. Acad. Sci. U.S.A.">
        <title>Large-scale phosphorylation analysis of mouse liver.</title>
        <authorList>
            <person name="Villen J."/>
            <person name="Beausoleil S.A."/>
            <person name="Gerber S.A."/>
            <person name="Gygi S.P."/>
        </authorList>
    </citation>
    <scope>PHOSPHORYLATION [LARGE SCALE ANALYSIS] AT SER-236</scope>
    <scope>IDENTIFICATION BY MASS SPECTROMETRY [LARGE SCALE ANALYSIS]</scope>
    <source>
        <tissue>Liver</tissue>
    </source>
</reference>
<reference key="6">
    <citation type="journal article" date="2009" name="Am. J. Pathol.">
        <title>Chloride intracellular channel protein-4 functions in angiogenesis by supporting acidification of vacuoles along the intracellular tubulogenic pathway.</title>
        <authorList>
            <person name="Ulmasov B."/>
            <person name="Bruno J."/>
            <person name="Gordon N."/>
            <person name="Hartnett M.E."/>
            <person name="Edwards J.C."/>
        </authorList>
    </citation>
    <scope>FUNCTION</scope>
    <scope>TISSUE SPECIFICITY</scope>
</reference>
<reference key="7">
    <citation type="journal article" date="2010" name="Cell">
        <title>A tissue-specific atlas of mouse protein phosphorylation and expression.</title>
        <authorList>
            <person name="Huttlin E.L."/>
            <person name="Jedrychowski M.P."/>
            <person name="Elias J.E."/>
            <person name="Goswami T."/>
            <person name="Rad R."/>
            <person name="Beausoleil S.A."/>
            <person name="Villen J."/>
            <person name="Haas W."/>
            <person name="Sowa M.E."/>
            <person name="Gygi S.P."/>
        </authorList>
    </citation>
    <scope>IDENTIFICATION BY MASS SPECTROMETRY [LARGE SCALE ANALYSIS]</scope>
    <source>
        <tissue>Brain</tissue>
        <tissue>Brown adipose tissue</tissue>
        <tissue>Heart</tissue>
        <tissue>Kidney</tissue>
        <tissue>Liver</tissue>
        <tissue>Lung</tissue>
        <tissue>Pancreas</tissue>
        <tissue>Spleen</tissue>
        <tissue>Testis</tissue>
    </source>
</reference>
<keyword id="KW-0007">Acetylation</keyword>
<keyword id="KW-0965">Cell junction</keyword>
<keyword id="KW-1003">Cell membrane</keyword>
<keyword id="KW-0868">Chloride</keyword>
<keyword id="KW-0869">Chloride channel</keyword>
<keyword id="KW-0963">Cytoplasm</keyword>
<keyword id="KW-0968">Cytoplasmic vesicle</keyword>
<keyword id="KW-0206">Cytoskeleton</keyword>
<keyword id="KW-0407">Ion channel</keyword>
<keyword id="KW-0406">Ion transport</keyword>
<keyword id="KW-0472">Membrane</keyword>
<keyword id="KW-0496">Mitochondrion</keyword>
<keyword id="KW-0539">Nucleus</keyword>
<keyword id="KW-0560">Oxidoreductase</keyword>
<keyword id="KW-0597">Phosphoprotein</keyword>
<keyword id="KW-1185">Reference proteome</keyword>
<keyword id="KW-0812">Transmembrane</keyword>
<keyword id="KW-1133">Transmembrane helix</keyword>
<keyword id="KW-0813">Transport</keyword>
<keyword id="KW-0851">Voltage-gated channel</keyword>
<feature type="initiator methionine" description="Removed" evidence="3">
    <location>
        <position position="1"/>
    </location>
</feature>
<feature type="chain" id="PRO_0000144211" description="Chloride intracellular channel protein 4">
    <location>
        <begin position="2"/>
        <end position="253"/>
    </location>
</feature>
<feature type="transmembrane region" description="Helical; Note=After insertion into the membrane" evidence="6">
    <location>
        <begin position="37"/>
        <end position="57"/>
    </location>
</feature>
<feature type="domain" description="GST C-terminal" evidence="7">
    <location>
        <begin position="81"/>
        <end position="244"/>
    </location>
</feature>
<feature type="region of interest" description="Required for insertion into the membrane" evidence="1">
    <location>
        <begin position="2"/>
        <end position="101"/>
    </location>
</feature>
<feature type="short sequence motif" description="G-site" evidence="4">
    <location>
        <begin position="35"/>
        <end position="38"/>
    </location>
</feature>
<feature type="modified residue" description="N-acetylalanine" evidence="3">
    <location>
        <position position="2"/>
    </location>
</feature>
<feature type="modified residue" description="Phosphoserine" evidence="3">
    <location>
        <position position="4"/>
    </location>
</feature>
<feature type="modified residue" description="N6-acetyllysine" evidence="2">
    <location>
        <position position="24"/>
    </location>
</feature>
<feature type="modified residue" description="N6-acetyllysine" evidence="3">
    <location>
        <position position="130"/>
    </location>
</feature>
<feature type="modified residue" description="Phosphoserine" evidence="2">
    <location>
        <position position="132"/>
    </location>
</feature>
<feature type="modified residue" description="Phosphoserine" evidence="2">
    <location>
        <position position="167"/>
    </location>
</feature>
<feature type="modified residue" description="Phosphoserine" evidence="12">
    <location>
        <position position="236"/>
    </location>
</feature>
<feature type="modified residue" description="Phosphotyrosine" evidence="5">
    <location>
        <position position="244"/>
    </location>
</feature>
<feature type="sequence conflict" description="In Ref. 2; BAC27301." evidence="11" ref="2">
    <original>D</original>
    <variation>Y</variation>
    <location>
        <position position="180"/>
    </location>
</feature>
<sequence length="253" mass="28729">MALSMPLNGLKEEDKEPLIELFVKAGSDGESIGNCPFSQRLFMILWLKGVVFSVTTVDLKRKPADLQNLAPGTHPPFITFNSEVKTDVNKIEEFLEEVLCPPKYLKLSPKHPESNTAGMDIFAKFSAYIKNSRPEANEALERGLLKTLQKLDEYLNSPLPDEIDENSMEDIKFSTRRFLDGDEMTLADCNLLPKLHIVKVVAKKYRNFDIPKGMTGIWRYLTNAYSRDEFTNTCPSDKEVEIAYSDVAKRLTK</sequence>
<gene>
    <name type="primary">Clic4</name>
</gene>
<evidence type="ECO:0000250" key="1"/>
<evidence type="ECO:0000250" key="2">
    <source>
        <dbReference type="UniProtKB" id="O00299"/>
    </source>
</evidence>
<evidence type="ECO:0000250" key="3">
    <source>
        <dbReference type="UniProtKB" id="Q9Y696"/>
    </source>
</evidence>
<evidence type="ECO:0000250" key="4">
    <source>
        <dbReference type="UniProtKB" id="Q9Z0W7"/>
    </source>
</evidence>
<evidence type="ECO:0000250" key="5">
    <source>
        <dbReference type="UniProtKB" id="Q9Z1Q5"/>
    </source>
</evidence>
<evidence type="ECO:0000255" key="6"/>
<evidence type="ECO:0000255" key="7">
    <source>
        <dbReference type="PROSITE-ProRule" id="PRU00685"/>
    </source>
</evidence>
<evidence type="ECO:0000269" key="8">
    <source>
    </source>
</evidence>
<evidence type="ECO:0000269" key="9">
    <source>
    </source>
</evidence>
<evidence type="ECO:0000269" key="10">
    <source>
    </source>
</evidence>
<evidence type="ECO:0000305" key="11"/>
<evidence type="ECO:0007744" key="12">
    <source>
    </source>
</evidence>